<proteinExistence type="inferred from homology"/>
<name>DTD_STRPF</name>
<reference key="1">
    <citation type="journal article" date="2006" name="Proc. Natl. Acad. Sci. U.S.A.">
        <title>Molecular genetic anatomy of inter- and intraserotype variation in the human bacterial pathogen group A Streptococcus.</title>
        <authorList>
            <person name="Beres S.B."/>
            <person name="Richter E.W."/>
            <person name="Nagiec M.J."/>
            <person name="Sumby P."/>
            <person name="Porcella S.F."/>
            <person name="DeLeo F.R."/>
            <person name="Musser J.M."/>
        </authorList>
    </citation>
    <scope>NUCLEOTIDE SEQUENCE [LARGE SCALE GENOMIC DNA]</scope>
    <source>
        <strain>MGAS10750</strain>
    </source>
</reference>
<protein>
    <recommendedName>
        <fullName evidence="1">D-aminoacyl-tRNA deacylase</fullName>
        <shortName evidence="1">DTD</shortName>
        <ecNumber evidence="1">3.1.1.96</ecNumber>
    </recommendedName>
    <alternativeName>
        <fullName evidence="1">Gly-tRNA(Ala) deacylase</fullName>
    </alternativeName>
</protein>
<comment type="function">
    <text evidence="1">An aminoacyl-tRNA editing enzyme that deacylates mischarged D-aminoacyl-tRNAs. Also deacylates mischarged glycyl-tRNA(Ala), protecting cells against glycine mischarging by AlaRS. Acts via tRNA-based rather than protein-based catalysis; rejects L-amino acids rather than detecting D-amino acids in the active site. By recycling D-aminoacyl-tRNA to D-amino acids and free tRNA molecules, this enzyme counteracts the toxicity associated with the formation of D-aminoacyl-tRNA entities in vivo and helps enforce protein L-homochirality.</text>
</comment>
<comment type="catalytic activity">
    <reaction evidence="1">
        <text>glycyl-tRNA(Ala) + H2O = tRNA(Ala) + glycine + H(+)</text>
        <dbReference type="Rhea" id="RHEA:53744"/>
        <dbReference type="Rhea" id="RHEA-COMP:9657"/>
        <dbReference type="Rhea" id="RHEA-COMP:13640"/>
        <dbReference type="ChEBI" id="CHEBI:15377"/>
        <dbReference type="ChEBI" id="CHEBI:15378"/>
        <dbReference type="ChEBI" id="CHEBI:57305"/>
        <dbReference type="ChEBI" id="CHEBI:78442"/>
        <dbReference type="ChEBI" id="CHEBI:78522"/>
        <dbReference type="EC" id="3.1.1.96"/>
    </reaction>
</comment>
<comment type="catalytic activity">
    <reaction evidence="1">
        <text>a D-aminoacyl-tRNA + H2O = a tRNA + a D-alpha-amino acid + H(+)</text>
        <dbReference type="Rhea" id="RHEA:13953"/>
        <dbReference type="Rhea" id="RHEA-COMP:10123"/>
        <dbReference type="Rhea" id="RHEA-COMP:10124"/>
        <dbReference type="ChEBI" id="CHEBI:15377"/>
        <dbReference type="ChEBI" id="CHEBI:15378"/>
        <dbReference type="ChEBI" id="CHEBI:59871"/>
        <dbReference type="ChEBI" id="CHEBI:78442"/>
        <dbReference type="ChEBI" id="CHEBI:79333"/>
        <dbReference type="EC" id="3.1.1.96"/>
    </reaction>
</comment>
<comment type="subunit">
    <text evidence="1">Homodimer.</text>
</comment>
<comment type="subcellular location">
    <subcellularLocation>
        <location evidence="1">Cytoplasm</location>
    </subcellularLocation>
</comment>
<comment type="domain">
    <text evidence="1">A Gly-cisPro motif from one monomer fits into the active site of the other monomer to allow specific chiral rejection of L-amino acids.</text>
</comment>
<comment type="similarity">
    <text evidence="1">Belongs to the DTD family.</text>
</comment>
<accession>Q1J4K7</accession>
<organism>
    <name type="scientific">Streptococcus pyogenes serotype M4 (strain MGAS10750)</name>
    <dbReference type="NCBI Taxonomy" id="370554"/>
    <lineage>
        <taxon>Bacteria</taxon>
        <taxon>Bacillati</taxon>
        <taxon>Bacillota</taxon>
        <taxon>Bacilli</taxon>
        <taxon>Lactobacillales</taxon>
        <taxon>Streptococcaceae</taxon>
        <taxon>Streptococcus</taxon>
    </lineage>
</organism>
<feature type="chain" id="PRO_0000259325" description="D-aminoacyl-tRNA deacylase">
    <location>
        <begin position="1"/>
        <end position="147"/>
    </location>
</feature>
<feature type="short sequence motif" description="Gly-cisPro motif, important for rejection of L-amino acids" evidence="1">
    <location>
        <begin position="136"/>
        <end position="137"/>
    </location>
</feature>
<dbReference type="EC" id="3.1.1.96" evidence="1"/>
<dbReference type="EMBL" id="CP000262">
    <property type="protein sequence ID" value="ABF38729.1"/>
    <property type="molecule type" value="Genomic_DNA"/>
</dbReference>
<dbReference type="SMR" id="Q1J4K7"/>
<dbReference type="KEGG" id="spi:MGAS10750_Spy1779"/>
<dbReference type="HOGENOM" id="CLU_076901_1_0_9"/>
<dbReference type="Proteomes" id="UP000002434">
    <property type="component" value="Chromosome"/>
</dbReference>
<dbReference type="GO" id="GO:0005737">
    <property type="term" value="C:cytoplasm"/>
    <property type="evidence" value="ECO:0007669"/>
    <property type="project" value="UniProtKB-SubCell"/>
</dbReference>
<dbReference type="GO" id="GO:0051500">
    <property type="term" value="F:D-tyrosyl-tRNA(Tyr) deacylase activity"/>
    <property type="evidence" value="ECO:0007669"/>
    <property type="project" value="TreeGrafter"/>
</dbReference>
<dbReference type="GO" id="GO:0106026">
    <property type="term" value="F:Gly-tRNA(Ala) deacylase activity"/>
    <property type="evidence" value="ECO:0007669"/>
    <property type="project" value="UniProtKB-UniRule"/>
</dbReference>
<dbReference type="GO" id="GO:0043908">
    <property type="term" value="F:Ser(Gly)-tRNA(Ala) hydrolase activity"/>
    <property type="evidence" value="ECO:0007669"/>
    <property type="project" value="UniProtKB-UniRule"/>
</dbReference>
<dbReference type="GO" id="GO:0000049">
    <property type="term" value="F:tRNA binding"/>
    <property type="evidence" value="ECO:0007669"/>
    <property type="project" value="UniProtKB-UniRule"/>
</dbReference>
<dbReference type="GO" id="GO:0019478">
    <property type="term" value="P:D-amino acid catabolic process"/>
    <property type="evidence" value="ECO:0007669"/>
    <property type="project" value="UniProtKB-UniRule"/>
</dbReference>
<dbReference type="CDD" id="cd00563">
    <property type="entry name" value="Dtyr_deacylase"/>
    <property type="match status" value="1"/>
</dbReference>
<dbReference type="FunFam" id="3.50.80.10:FF:000001">
    <property type="entry name" value="D-aminoacyl-tRNA deacylase"/>
    <property type="match status" value="1"/>
</dbReference>
<dbReference type="Gene3D" id="3.50.80.10">
    <property type="entry name" value="D-tyrosyl-tRNA(Tyr) deacylase"/>
    <property type="match status" value="1"/>
</dbReference>
<dbReference type="HAMAP" id="MF_00518">
    <property type="entry name" value="Deacylase_Dtd"/>
    <property type="match status" value="1"/>
</dbReference>
<dbReference type="InterPro" id="IPR003732">
    <property type="entry name" value="Daa-tRNA_deacyls_DTD"/>
</dbReference>
<dbReference type="InterPro" id="IPR023509">
    <property type="entry name" value="DTD-like_sf"/>
</dbReference>
<dbReference type="NCBIfam" id="TIGR00256">
    <property type="entry name" value="D-aminoacyl-tRNA deacylase"/>
    <property type="match status" value="1"/>
</dbReference>
<dbReference type="PANTHER" id="PTHR10472:SF5">
    <property type="entry name" value="D-AMINOACYL-TRNA DEACYLASE 1"/>
    <property type="match status" value="1"/>
</dbReference>
<dbReference type="PANTHER" id="PTHR10472">
    <property type="entry name" value="D-TYROSYL-TRNA TYR DEACYLASE"/>
    <property type="match status" value="1"/>
</dbReference>
<dbReference type="Pfam" id="PF02580">
    <property type="entry name" value="Tyr_Deacylase"/>
    <property type="match status" value="1"/>
</dbReference>
<dbReference type="SUPFAM" id="SSF69500">
    <property type="entry name" value="DTD-like"/>
    <property type="match status" value="1"/>
</dbReference>
<gene>
    <name evidence="1" type="primary">dtd</name>
    <name type="ordered locus">MGAS10750_Spy1779</name>
</gene>
<evidence type="ECO:0000255" key="1">
    <source>
        <dbReference type="HAMAP-Rule" id="MF_00518"/>
    </source>
</evidence>
<sequence length="147" mass="15843">MKLVLQRVKEASVSIDGKIAGAINQGLLLLVGVGPDDNAEDLAYAVRKIVNMRIFSDADGKMNQSIQDIKGSILSVSQFTLYADTKKGNRPAFTGAAKPDLASQLYDSFNEQLAEFVPVERGVFGADMQVSLINDGPVTIILDTKCH</sequence>
<keyword id="KW-0963">Cytoplasm</keyword>
<keyword id="KW-0378">Hydrolase</keyword>
<keyword id="KW-0694">RNA-binding</keyword>
<keyword id="KW-0820">tRNA-binding</keyword>